<feature type="chain" id="PRO_0000326566" description="Protein TIC 214">
    <location>
        <begin position="1"/>
        <end position="1877"/>
    </location>
</feature>
<feature type="transmembrane region" description="Helical" evidence="2">
    <location>
        <begin position="18"/>
        <end position="38"/>
    </location>
</feature>
<feature type="transmembrane region" description="Helical" evidence="2">
    <location>
        <begin position="64"/>
        <end position="84"/>
    </location>
</feature>
<feature type="transmembrane region" description="Helical" evidence="2">
    <location>
        <begin position="87"/>
        <end position="107"/>
    </location>
</feature>
<feature type="transmembrane region" description="Helical" evidence="2">
    <location>
        <begin position="124"/>
        <end position="144"/>
    </location>
</feature>
<feature type="transmembrane region" description="Helical" evidence="2">
    <location>
        <begin position="172"/>
        <end position="192"/>
    </location>
</feature>
<feature type="transmembrane region" description="Helical" evidence="2">
    <location>
        <begin position="221"/>
        <end position="241"/>
    </location>
</feature>
<feature type="region of interest" description="Disordered" evidence="3">
    <location>
        <begin position="246"/>
        <end position="313"/>
    </location>
</feature>
<feature type="region of interest" description="Disordered" evidence="3">
    <location>
        <begin position="644"/>
        <end position="695"/>
    </location>
</feature>
<feature type="region of interest" description="Disordered" evidence="3">
    <location>
        <begin position="774"/>
        <end position="795"/>
    </location>
</feature>
<feature type="compositionally biased region" description="Acidic residues" evidence="3">
    <location>
        <begin position="251"/>
        <end position="268"/>
    </location>
</feature>
<feature type="compositionally biased region" description="Acidic residues" evidence="3">
    <location>
        <begin position="281"/>
        <end position="304"/>
    </location>
</feature>
<feature type="compositionally biased region" description="Acidic residues" evidence="3">
    <location>
        <begin position="645"/>
        <end position="659"/>
    </location>
</feature>
<feature type="compositionally biased region" description="Basic and acidic residues" evidence="3">
    <location>
        <begin position="685"/>
        <end position="695"/>
    </location>
</feature>
<feature type="sequence conflict" description="In Ref. 1; ABQ43318." evidence="4" ref="1">
    <original>LNNEFIN</original>
    <variation>KKIIIII</variation>
    <location>
        <begin position="448"/>
        <end position="454"/>
    </location>
</feature>
<accession>A6MMG9</accession>
<accession>A6MMI1</accession>
<protein>
    <recommendedName>
        <fullName evidence="1">Protein TIC 214</fullName>
    </recommendedName>
    <alternativeName>
        <fullName evidence="1">Translocon at the inner envelope membrane of chloroplasts 214</fullName>
        <shortName evidence="1">AtTIC214</shortName>
    </alternativeName>
</protein>
<sequence>MILKSFLLGNLLSLCMKIINSVVVVGLYYGFLTTFSVGPSYLFLLRARVMEEGTEKEVSATTGFITGQLMMFISIYYAPLHLALGRPHTITVLVLPYLLFHFFWKNHKHFFDYGSTTRNSMRNLSIQCVFLNNLIFQLFNHFILPSSTLARLVNIYMFRCNNKMLFVTSSFVGWLIGHILFMKWVGLVLFWIRQNNSIRSNVLIRSNKYLVSELRNSMARIFRILLFITCVYYLGRIPSPIVTKKLKETSETEEGGESEEETDVEIETTSETRGTQKEQEGSTEEDPSLCSEEKEDPDKIDETEEIRVNGKEKTKDEFHKHRPVYENSYLDGKKKIENWELGILKEDKDLFWFEKPLLTLLFDYKRWNRPLRYIKNDRFENAVRNEMSQYFFHTCPSDGKQIISFTYPPSLSTFLEMIQKKMSLCTTKPEPEDLYNNWIYINDQKINLNNEFINRIEALDRGSLAMDILEKRTRLCNDENEQEYLLEMYDPLLNGPYRGTIKKCNSRSIKDDSITPTEDSIKRIWINNIYGILSTDYREFEHKIDLFDRESLSTDIGHSLTLIIGHSLPAISKFAGESEPSLNFKRLALLAEQRRIDSENKEKCLQLLSEENTTHPNDQTIRNQSIGIEEIGKRVPRWSYKLTDDFEEQEEEDEEESTEDHEIRSRKAKRVVIYTDNDENTDTDTSTKDTTNSDRAEEVALIRYSQQSDFRRNLIKGSMRAQRRKTVTWEMFQANVHSPLFLNRIDRTSPFFSFDFDIAQIMKPLLRNWMENEPEFKTSDSEEKEAKEEEKQKKEKQEADERIFIAEIWDTIIFAQAIRGSMLVTQSILRKYIVLPSLIIAKNIGRMLLFQFPEWYEDLKGWNKEMHIKCTYNGVQLSETEFPKDWLTDGIQIKILFPFCLKPWRRSKLKLRSHHEDPLTLKKKGKKENFCFLTIWGMETELPFGSPRKQPSFFEPISKELEKIIRKVKRKFFLVLRVFKERTKWFLKLSKEKAKWVVLFIKRILKEFEKVNPISLFGLMKVHEPSEKGKDCIISNKIAHESPIQIRSMDWTNYSLTEQKMKDLANRITTIRNQIEKITKEKKKRFLTPDINISPNEIGCDDKRSESQKHIWQISKRRSAKLIRNWPYLMKSFIERIYIDIFLCTINIPIINAQLLLESTKKIIDKYIYNDETNQEGIDETNLNIIHFISTIKKSLSNTNISNKNLQIYCDLSSLSQAYVFYKLSKIKVINLYRLGSALQYHETYLFLKDRIKDYCGTQGIFDSESRHKKPQNSGMNEWKNWLRGHYQYKLSQTKWSRLVPRKWRNRVNQRRMIPNKDSKKWNSYEKEKDQLIHYDKKNDSAVDSLPSQKEKFKKHSRYDLLSHKYIIYEDGKDSSIYGSLLQVNRNQEIPYNYKTHKPKPFYVPGGIAISDYLGEEYIIDIDTDQNPDRKYFDWGILRFCFRKNNINIEPWTDMDSGTNNYQITDKKDLFSLTIHQEINPSTSNSNQKKNFFDWMGMNEEMLSRPISNLEPWFFPEFVLLSDAYKVNPRTIPIKLLLFNFHENENIQNENISENKNINGNKKKDFRISSNQKEYLDQNHEEKELLGQEDCGSDPRNQQKYIEEDYTGSDIKKRRSRKKKLSKSNEEVELDFFLKRYLFFQLRWDYSLDQRIINNIKIYCLLLRLINPNEIAISSIQKGEMFLDVMAIQKDLAFTELRKKGIFIIEPLRLSIKWDGPFYMYQTVGISLVHKSKHQINRRYREKRYVDQNHFNRSTAQHGKILVNGDENHYDLLFPEKIPSTRRRKEMRILISFNSGNGNVVNRNPVFLNGNNVRNCSQFFDEDKHFDTNKFMKFKFFLWPNYRLEDLACMNRYWFDTNNGSRFSMLRIHMYPRFIIS</sequence>
<gene>
    <name evidence="1" type="primary">TIC214</name>
    <name type="synonym">ycf1-A</name>
</gene>
<gene>
    <name evidence="1" type="primary">TIC214</name>
    <name type="synonym">ycf1-B</name>
</gene>
<dbReference type="EMBL" id="EF380352">
    <property type="protein sequence ID" value="ABQ43306.1"/>
    <property type="molecule type" value="Genomic_DNA"/>
</dbReference>
<dbReference type="EMBL" id="EF380352">
    <property type="protein sequence ID" value="ABQ43318.1"/>
    <property type="molecule type" value="Genomic_DNA"/>
</dbReference>
<dbReference type="GO" id="GO:0009706">
    <property type="term" value="C:chloroplast inner membrane"/>
    <property type="evidence" value="ECO:0007669"/>
    <property type="project" value="UniProtKB-SubCell"/>
</dbReference>
<dbReference type="GO" id="GO:0015031">
    <property type="term" value="P:protein transport"/>
    <property type="evidence" value="ECO:0007669"/>
    <property type="project" value="UniProtKB-KW"/>
</dbReference>
<dbReference type="InterPro" id="IPR008896">
    <property type="entry name" value="TIC214"/>
</dbReference>
<dbReference type="PANTHER" id="PTHR33163:SF40">
    <property type="entry name" value="PROTEIN TIC 214"/>
    <property type="match status" value="1"/>
</dbReference>
<dbReference type="PANTHER" id="PTHR33163">
    <property type="entry name" value="PROTEIN TIC 214-RELATED"/>
    <property type="match status" value="1"/>
</dbReference>
<dbReference type="Pfam" id="PF05758">
    <property type="entry name" value="Ycf1"/>
    <property type="match status" value="1"/>
</dbReference>
<geneLocation type="chloroplast"/>
<proteinExistence type="inferred from homology"/>
<organism>
    <name type="scientific">Chloranthus spicatus</name>
    <name type="common">Chulantree</name>
    <name type="synonym">Nigrina spicata</name>
    <dbReference type="NCBI Taxonomy" id="13006"/>
    <lineage>
        <taxon>Eukaryota</taxon>
        <taxon>Viridiplantae</taxon>
        <taxon>Streptophyta</taxon>
        <taxon>Embryophyta</taxon>
        <taxon>Tracheophyta</taxon>
        <taxon>Spermatophyta</taxon>
        <taxon>Magnoliopsida</taxon>
        <taxon>Chloranthales</taxon>
        <taxon>Chloranthaceae</taxon>
        <taxon>Chloranthus</taxon>
    </lineage>
</organism>
<reference key="1">
    <citation type="journal article" date="2007" name="Mol. Phylogenet. Evol.">
        <title>Phylogenetic and evolutionary implications of complete chloroplast genome sequences of four early-diverging angiosperms: Buxus (Buxaceae), Chloranthus (Chloranthaceae), Dioscorea (Dioscoreaceae), and Illicium (Schisandraceae).</title>
        <authorList>
            <person name="Hansen D.R."/>
            <person name="Dastidar S.G."/>
            <person name="Cai Z."/>
            <person name="Penaflor C."/>
            <person name="Kuehl J.V."/>
            <person name="Boore J.L."/>
            <person name="Jansen R.K."/>
        </authorList>
    </citation>
    <scope>NUCLEOTIDE SEQUENCE [LARGE SCALE GENOMIC DNA]</scope>
</reference>
<keyword id="KW-0150">Chloroplast</keyword>
<keyword id="KW-0472">Membrane</keyword>
<keyword id="KW-0934">Plastid</keyword>
<keyword id="KW-1001">Plastid inner membrane</keyword>
<keyword id="KW-0653">Protein transport</keyword>
<keyword id="KW-0812">Transmembrane</keyword>
<keyword id="KW-1133">Transmembrane helix</keyword>
<keyword id="KW-0813">Transport</keyword>
<comment type="function">
    <text evidence="1">Involved in protein precursor import into chloroplasts. May be part of an intermediate translocation complex acting as a protein-conducting channel at the inner envelope.</text>
</comment>
<comment type="subunit">
    <text evidence="1">Part of the Tic complex.</text>
</comment>
<comment type="subcellular location">
    <subcellularLocation>
        <location evidence="1">Plastid</location>
        <location evidence="1">Chloroplast inner membrane</location>
        <topology evidence="2">Multi-pass membrane protein</topology>
    </subcellularLocation>
</comment>
<comment type="miscellaneous">
    <text>There is a partial copy of the N-terminus (positions 1-454) of ycf1 in the inverted repeat (ABQ43318).</text>
</comment>
<comment type="similarity">
    <text evidence="4">Belongs to the TIC214 family.</text>
</comment>
<evidence type="ECO:0000250" key="1">
    <source>
        <dbReference type="UniProtKB" id="P56785"/>
    </source>
</evidence>
<evidence type="ECO:0000255" key="2"/>
<evidence type="ECO:0000256" key="3">
    <source>
        <dbReference type="SAM" id="MobiDB-lite"/>
    </source>
</evidence>
<evidence type="ECO:0000305" key="4"/>
<name>TI214_CHLSC</name>